<comment type="function">
    <text evidence="1">Catalyzes the formation of 6,7-dimethyl-8-ribityllumazine by condensation of 5-amino-6-(D-ribitylamino)uracil with 3,4-dihydroxy-2-butanone 4-phosphate. This is the penultimate step in the biosynthesis of riboflavin.</text>
</comment>
<comment type="catalytic activity">
    <reaction evidence="1">
        <text>(2S)-2-hydroxy-3-oxobutyl phosphate + 5-amino-6-(D-ribitylamino)uracil = 6,7-dimethyl-8-(1-D-ribityl)lumazine + phosphate + 2 H2O + H(+)</text>
        <dbReference type="Rhea" id="RHEA:26152"/>
        <dbReference type="ChEBI" id="CHEBI:15377"/>
        <dbReference type="ChEBI" id="CHEBI:15378"/>
        <dbReference type="ChEBI" id="CHEBI:15934"/>
        <dbReference type="ChEBI" id="CHEBI:43474"/>
        <dbReference type="ChEBI" id="CHEBI:58201"/>
        <dbReference type="ChEBI" id="CHEBI:58830"/>
        <dbReference type="EC" id="2.5.1.78"/>
    </reaction>
</comment>
<comment type="pathway">
    <text evidence="1">Cofactor biosynthesis; riboflavin biosynthesis; riboflavin from 2-hydroxy-3-oxobutyl phosphate and 5-amino-6-(D-ribitylamino)uracil: step 1/2.</text>
</comment>
<comment type="similarity">
    <text evidence="1">Belongs to the DMRL synthase family.</text>
</comment>
<feature type="chain" id="PRO_1000040406" description="6,7-dimethyl-8-ribityllumazine synthase">
    <location>
        <begin position="1"/>
        <end position="153"/>
    </location>
</feature>
<feature type="active site" description="Proton donor" evidence="1">
    <location>
        <position position="88"/>
    </location>
</feature>
<feature type="binding site" evidence="1">
    <location>
        <position position="22"/>
    </location>
    <ligand>
        <name>5-amino-6-(D-ribitylamino)uracil</name>
        <dbReference type="ChEBI" id="CHEBI:15934"/>
    </ligand>
</feature>
<feature type="binding site" evidence="1">
    <location>
        <begin position="56"/>
        <end position="58"/>
    </location>
    <ligand>
        <name>5-amino-6-(D-ribitylamino)uracil</name>
        <dbReference type="ChEBI" id="CHEBI:15934"/>
    </ligand>
</feature>
<feature type="binding site" evidence="1">
    <location>
        <begin position="80"/>
        <end position="82"/>
    </location>
    <ligand>
        <name>5-amino-6-(D-ribitylamino)uracil</name>
        <dbReference type="ChEBI" id="CHEBI:15934"/>
    </ligand>
</feature>
<feature type="binding site" evidence="1">
    <location>
        <begin position="85"/>
        <end position="86"/>
    </location>
    <ligand>
        <name>(2S)-2-hydroxy-3-oxobutyl phosphate</name>
        <dbReference type="ChEBI" id="CHEBI:58830"/>
    </ligand>
</feature>
<feature type="binding site" evidence="1">
    <location>
        <position position="113"/>
    </location>
    <ligand>
        <name>5-amino-6-(D-ribitylamino)uracil</name>
        <dbReference type="ChEBI" id="CHEBI:15934"/>
    </ligand>
</feature>
<feature type="binding site" evidence="1">
    <location>
        <position position="127"/>
    </location>
    <ligand>
        <name>(2S)-2-hydroxy-3-oxobutyl phosphate</name>
        <dbReference type="ChEBI" id="CHEBI:58830"/>
    </ligand>
</feature>
<evidence type="ECO:0000255" key="1">
    <source>
        <dbReference type="HAMAP-Rule" id="MF_00178"/>
    </source>
</evidence>
<organism>
    <name type="scientific">Clostridium perfringens (strain ATCC 13124 / DSM 756 / JCM 1290 / NCIMB 6125 / NCTC 8237 / Type A)</name>
    <dbReference type="NCBI Taxonomy" id="195103"/>
    <lineage>
        <taxon>Bacteria</taxon>
        <taxon>Bacillati</taxon>
        <taxon>Bacillota</taxon>
        <taxon>Clostridia</taxon>
        <taxon>Eubacteriales</taxon>
        <taxon>Clostridiaceae</taxon>
        <taxon>Clostridium</taxon>
    </lineage>
</organism>
<reference key="1">
    <citation type="journal article" date="2006" name="Genome Res.">
        <title>Skewed genomic variability in strains of the toxigenic bacterial pathogen, Clostridium perfringens.</title>
        <authorList>
            <person name="Myers G.S.A."/>
            <person name="Rasko D.A."/>
            <person name="Cheung J.K."/>
            <person name="Ravel J."/>
            <person name="Seshadri R."/>
            <person name="DeBoy R.T."/>
            <person name="Ren Q."/>
            <person name="Varga J."/>
            <person name="Awad M.M."/>
            <person name="Brinkac L.M."/>
            <person name="Daugherty S.C."/>
            <person name="Haft D.H."/>
            <person name="Dodson R.J."/>
            <person name="Madupu R."/>
            <person name="Nelson W.C."/>
            <person name="Rosovitz M.J."/>
            <person name="Sullivan S.A."/>
            <person name="Khouri H."/>
            <person name="Dimitrov G.I."/>
            <person name="Watkins K.L."/>
            <person name="Mulligan S."/>
            <person name="Benton J."/>
            <person name="Radune D."/>
            <person name="Fisher D.J."/>
            <person name="Atkins H.S."/>
            <person name="Hiscox T."/>
            <person name="Jost B.H."/>
            <person name="Billington S.J."/>
            <person name="Songer J.G."/>
            <person name="McClane B.A."/>
            <person name="Titball R.W."/>
            <person name="Rood J.I."/>
            <person name="Melville S.B."/>
            <person name="Paulsen I.T."/>
        </authorList>
    </citation>
    <scope>NUCLEOTIDE SEQUENCE [LARGE SCALE GENOMIC DNA]</scope>
    <source>
        <strain>ATCC 13124 / DSM 756 / JCM 1290 / NCIMB 6125 / NCTC 8237 / S 107 / Type A</strain>
    </source>
</reference>
<name>RISB_CLOP1</name>
<gene>
    <name evidence="1" type="primary">ribH</name>
    <name type="ordered locus">CPF_0549</name>
</gene>
<dbReference type="EC" id="2.5.1.78" evidence="1"/>
<dbReference type="EMBL" id="CP000246">
    <property type="protein sequence ID" value="ABG82771.1"/>
    <property type="molecule type" value="Genomic_DNA"/>
</dbReference>
<dbReference type="RefSeq" id="WP_003471176.1">
    <property type="nucleotide sequence ID" value="NC_008261.1"/>
</dbReference>
<dbReference type="SMR" id="Q0TTN7"/>
<dbReference type="STRING" id="195103.CPF_0549"/>
<dbReference type="PaxDb" id="195103-CPF_0549"/>
<dbReference type="GeneID" id="93003108"/>
<dbReference type="KEGG" id="cpf:CPF_0549"/>
<dbReference type="eggNOG" id="COG0054">
    <property type="taxonomic scope" value="Bacteria"/>
</dbReference>
<dbReference type="HOGENOM" id="CLU_089358_1_1_9"/>
<dbReference type="UniPathway" id="UPA00275">
    <property type="reaction ID" value="UER00404"/>
</dbReference>
<dbReference type="Proteomes" id="UP000001823">
    <property type="component" value="Chromosome"/>
</dbReference>
<dbReference type="GO" id="GO:0005829">
    <property type="term" value="C:cytosol"/>
    <property type="evidence" value="ECO:0007669"/>
    <property type="project" value="TreeGrafter"/>
</dbReference>
<dbReference type="GO" id="GO:0009349">
    <property type="term" value="C:riboflavin synthase complex"/>
    <property type="evidence" value="ECO:0007669"/>
    <property type="project" value="InterPro"/>
</dbReference>
<dbReference type="GO" id="GO:0000906">
    <property type="term" value="F:6,7-dimethyl-8-ribityllumazine synthase activity"/>
    <property type="evidence" value="ECO:0007669"/>
    <property type="project" value="UniProtKB-UniRule"/>
</dbReference>
<dbReference type="GO" id="GO:0009231">
    <property type="term" value="P:riboflavin biosynthetic process"/>
    <property type="evidence" value="ECO:0007669"/>
    <property type="project" value="UniProtKB-UniRule"/>
</dbReference>
<dbReference type="CDD" id="cd09209">
    <property type="entry name" value="Lumazine_synthase-I"/>
    <property type="match status" value="1"/>
</dbReference>
<dbReference type="FunFam" id="3.40.50.960:FF:000001">
    <property type="entry name" value="6,7-dimethyl-8-ribityllumazine synthase"/>
    <property type="match status" value="1"/>
</dbReference>
<dbReference type="Gene3D" id="3.40.50.960">
    <property type="entry name" value="Lumazine/riboflavin synthase"/>
    <property type="match status" value="1"/>
</dbReference>
<dbReference type="HAMAP" id="MF_00178">
    <property type="entry name" value="Lumazine_synth"/>
    <property type="match status" value="1"/>
</dbReference>
<dbReference type="InterPro" id="IPR034964">
    <property type="entry name" value="LS"/>
</dbReference>
<dbReference type="InterPro" id="IPR002180">
    <property type="entry name" value="LS/RS"/>
</dbReference>
<dbReference type="InterPro" id="IPR036467">
    <property type="entry name" value="LS/RS_sf"/>
</dbReference>
<dbReference type="NCBIfam" id="TIGR00114">
    <property type="entry name" value="lumazine-synth"/>
    <property type="match status" value="1"/>
</dbReference>
<dbReference type="NCBIfam" id="NF000812">
    <property type="entry name" value="PRK00061.1-4"/>
    <property type="match status" value="1"/>
</dbReference>
<dbReference type="PANTHER" id="PTHR21058:SF0">
    <property type="entry name" value="6,7-DIMETHYL-8-RIBITYLLUMAZINE SYNTHASE"/>
    <property type="match status" value="1"/>
</dbReference>
<dbReference type="PANTHER" id="PTHR21058">
    <property type="entry name" value="6,7-DIMETHYL-8-RIBITYLLUMAZINE SYNTHASE DMRL SYNTHASE LUMAZINE SYNTHASE"/>
    <property type="match status" value="1"/>
</dbReference>
<dbReference type="Pfam" id="PF00885">
    <property type="entry name" value="DMRL_synthase"/>
    <property type="match status" value="1"/>
</dbReference>
<dbReference type="SUPFAM" id="SSF52121">
    <property type="entry name" value="Lumazine synthase"/>
    <property type="match status" value="1"/>
</dbReference>
<keyword id="KW-0686">Riboflavin biosynthesis</keyword>
<keyword id="KW-0808">Transferase</keyword>
<sequence length="153" mass="16369">MRILEGNLIGQDKKFAIVAGRFNEFIVSKLIDGALDAFKRHGVEEDNIDLAWVPGAFEIPLIAKKLAKSGKYAGVVCLGTVIRGATSHYDYVCGEVSKGIANVSLDTEVPVIFGIVTTENIEQAIERAGTKAGNKGFDAAMAAIEMANLLENI</sequence>
<proteinExistence type="inferred from homology"/>
<protein>
    <recommendedName>
        <fullName evidence="1">6,7-dimethyl-8-ribityllumazine synthase</fullName>
        <shortName evidence="1">DMRL synthase</shortName>
        <shortName evidence="1">LS</shortName>
        <shortName evidence="1">Lumazine synthase</shortName>
        <ecNumber evidence="1">2.5.1.78</ecNumber>
    </recommendedName>
</protein>
<accession>Q0TTN7</accession>